<name>CAPSD_TMVB</name>
<proteinExistence type="inferred from homology"/>
<sequence>MSYSITTPSQFVFLSSAWADPIELINLCTNALGNQFQTQQARTVVQRQFSEVWKPSPQVTVRFPDSDFKVYRYNAVLDPLVTALLGAFDTRNRIIEVENQANPTTAETLDATRRVDDATVAIRSAINNLIVELIRGTGSYNRSSFESSSGLVWTSGPAT</sequence>
<comment type="function">
    <text>Capsid protein self-assembles to form rod-shaped virions about 18 nm in diameter with a central canal enclosing the viral genomic RNA.</text>
</comment>
<comment type="subcellular location">
    <subcellularLocation>
        <location evidence="2">Virion</location>
    </subcellularLocation>
</comment>
<comment type="similarity">
    <text evidence="2">Belongs to the virgaviridae capsid protein family.</text>
</comment>
<evidence type="ECO:0000250" key="1"/>
<evidence type="ECO:0000305" key="2"/>
<organism>
    <name type="scientific">Tobacco mosaic virus (strain B935A)</name>
    <name type="common">TMV</name>
    <dbReference type="NCBI Taxonomy" id="138309"/>
    <lineage>
        <taxon>Viruses</taxon>
        <taxon>Riboviria</taxon>
        <taxon>Orthornavirae</taxon>
        <taxon>Kitrinoviricota</taxon>
        <taxon>Alsuviricetes</taxon>
        <taxon>Martellivirales</taxon>
        <taxon>Virgaviridae</taxon>
        <taxon>Tobamovirus</taxon>
        <taxon>Tobacco mosaic virus</taxon>
    </lineage>
</organism>
<gene>
    <name type="primary">CP</name>
</gene>
<keyword id="KW-0007">Acetylation</keyword>
<keyword id="KW-0167">Capsid protein</keyword>
<keyword id="KW-1139">Helical capsid protein</keyword>
<keyword id="KW-0946">Virion</keyword>
<organismHost>
    <name type="scientific">Nicotiana tabacum</name>
    <name type="common">Common tobacco</name>
    <dbReference type="NCBI Taxonomy" id="4097"/>
</organismHost>
<reference key="1">
    <citation type="submission" date="1998-10" db="EMBL/GenBank/DDBJ databases">
        <title>Complete nucleotide sequence and genome organization of tobacco mosaic virus isolated from Vicia faba.</title>
        <authorList>
            <person name="Xue C."/>
            <person name="Zhou X."/>
            <person name="Chen Q."/>
            <person name="Qi Y."/>
            <person name="Li D."/>
        </authorList>
    </citation>
    <scope>NUCLEOTIDE SEQUENCE [GENOMIC RNA]</scope>
</reference>
<dbReference type="EMBL" id="AJ011933">
    <property type="protein sequence ID" value="CAA09877.1"/>
    <property type="molecule type" value="Genomic_RNA"/>
</dbReference>
<dbReference type="RefSeq" id="NP_597750.1">
    <property type="nucleotide sequence ID" value="NC_001367.1"/>
</dbReference>
<dbReference type="SMR" id="P69688"/>
<dbReference type="KEGG" id="vg:1494080"/>
<dbReference type="Proteomes" id="UP000000279">
    <property type="component" value="Genome"/>
</dbReference>
<dbReference type="GO" id="GO:0019029">
    <property type="term" value="C:helical viral capsid"/>
    <property type="evidence" value="ECO:0007669"/>
    <property type="project" value="UniProtKB-KW"/>
</dbReference>
<dbReference type="GO" id="GO:0005198">
    <property type="term" value="F:structural molecule activity"/>
    <property type="evidence" value="ECO:0007669"/>
    <property type="project" value="InterPro"/>
</dbReference>
<dbReference type="Gene3D" id="1.20.120.70">
    <property type="entry name" value="Tobacco mosaic virus-like, coat protein"/>
    <property type="match status" value="1"/>
</dbReference>
<dbReference type="InterPro" id="IPR001337">
    <property type="entry name" value="TMV-like_coat"/>
</dbReference>
<dbReference type="InterPro" id="IPR036417">
    <property type="entry name" value="TMV-like_coat_sf"/>
</dbReference>
<dbReference type="Pfam" id="PF00721">
    <property type="entry name" value="TMV_coat"/>
    <property type="match status" value="1"/>
</dbReference>
<dbReference type="SUPFAM" id="SSF47195">
    <property type="entry name" value="TMV-like viral coat proteins"/>
    <property type="match status" value="1"/>
</dbReference>
<accession>P69688</accession>
<accession>P03570</accession>
<feature type="initiator methionine" description="Removed; by host" evidence="1">
    <location>
        <position position="1"/>
    </location>
</feature>
<feature type="chain" id="PRO_0000144919" description="Capsid protein">
    <location>
        <begin position="2"/>
        <end position="159"/>
    </location>
</feature>
<feature type="modified residue" description="N-acetylserine; by host" evidence="1">
    <location>
        <position position="2"/>
    </location>
</feature>
<protein>
    <recommendedName>
        <fullName>Capsid protein</fullName>
    </recommendedName>
    <alternativeName>
        <fullName>Coat protein</fullName>
    </alternativeName>
</protein>